<gene>
    <name type="primary">ITIH4</name>
    <name type="synonym">IHRP</name>
    <name type="synonym">ITIHL1</name>
    <name type="synonym">PK120</name>
    <name type="ORF">PRO1851</name>
</gene>
<protein>
    <recommendedName>
        <fullName>Inter-alpha-trypsin inhibitor heavy chain H4</fullName>
        <shortName>ITI heavy chain H4</shortName>
        <shortName>ITI-HC4</shortName>
        <shortName>Inter-alpha-inhibitor heavy chain 4</shortName>
    </recommendedName>
    <alternativeName>
        <fullName>Inter-alpha-trypsin inhibitor family heavy chain-related protein</fullName>
        <shortName>IHRP</shortName>
    </alternativeName>
    <alternativeName>
        <fullName>Plasma kallikrein sensitive glycoprotein 120</fullName>
        <shortName>Gp120</shortName>
        <shortName>PK-120</shortName>
    </alternativeName>
    <component>
        <recommendedName>
            <fullName>70 kDa inter-alpha-trypsin inhibitor heavy chain H4</fullName>
        </recommendedName>
    </component>
    <component>
        <recommendedName>
            <fullName>35 kDa inter-alpha-trypsin inhibitor heavy chain H4</fullName>
        </recommendedName>
    </component>
</protein>
<reference key="1">
    <citation type="journal article" date="1995" name="FEBS Lett.">
        <title>cDNA and deduced amino acid sequence of human PK-120, a plasma kallikrein-sensitive glycoprotein.</title>
        <authorList>
            <person name="Nishimura H."/>
            <person name="Kakizaki I."/>
            <person name="Muta T."/>
            <person name="Sasaki N."/>
            <person name="Pu P.X."/>
            <person name="Yamashita T."/>
            <person name="Nagasawa S."/>
        </authorList>
    </citation>
    <scope>NUCLEOTIDE SEQUENCE [MRNA] (ISOFORM 1)</scope>
    <scope>PARTIAL PROTEIN SEQUENCE</scope>
    <scope>TISSUE SPECIFICITY</scope>
    <source>
        <tissue>Liver</tissue>
    </source>
</reference>
<reference key="2">
    <citation type="journal article" date="1995" name="J. Biochem.">
        <title>Cloning and characterization of cDNA for inter-alpha-trypsin inhibitor family heavy chain-related protein (IHRP), a novel human plasma glycoprotein.</title>
        <authorList>
            <person name="Saguchi K."/>
            <person name="Tobe T."/>
            <person name="Hashimoto K."/>
            <person name="Sano Y."/>
            <person name="Nakano Y."/>
            <person name="Miura N.-H."/>
            <person name="Tomita M."/>
        </authorList>
    </citation>
    <scope>NUCLEOTIDE SEQUENCE [MRNA] (ISOFORM 1)</scope>
    <scope>PARTIAL PROTEIN SEQUENCE</scope>
    <scope>IDENTIFICATION</scope>
    <scope>TISSUE SPECIFICITY</scope>
    <scope>VARIANT ASN-85</scope>
    <source>
        <tissue>Liver</tissue>
    </source>
</reference>
<reference key="3">
    <citation type="journal article" date="1996" name="J. Biochem.">
        <title>Isolation and characterization of the human inter-alpha-trypsin inhibitor family heavy chain-related protein (IHRP) gene (ITIHL1).</title>
        <authorList>
            <person name="Saguchi K."/>
            <person name="Tobe T."/>
            <person name="Hashimoto K."/>
            <person name="Nagasaki Y."/>
            <person name="Oda E."/>
            <person name="Nakano Y."/>
            <person name="Miura N.H."/>
            <person name="Tomita M."/>
        </authorList>
    </citation>
    <scope>NUCLEOTIDE SEQUENCE [GENOMIC DNA] (ISOFORM 1)</scope>
</reference>
<reference key="4">
    <citation type="journal article" date="2004" name="Nat. Genet.">
        <title>Complete sequencing and characterization of 21,243 full-length human cDNAs.</title>
        <authorList>
            <person name="Ota T."/>
            <person name="Suzuki Y."/>
            <person name="Nishikawa T."/>
            <person name="Otsuki T."/>
            <person name="Sugiyama T."/>
            <person name="Irie R."/>
            <person name="Wakamatsu A."/>
            <person name="Hayashi K."/>
            <person name="Sato H."/>
            <person name="Nagai K."/>
            <person name="Kimura K."/>
            <person name="Makita H."/>
            <person name="Sekine M."/>
            <person name="Obayashi M."/>
            <person name="Nishi T."/>
            <person name="Shibahara T."/>
            <person name="Tanaka T."/>
            <person name="Ishii S."/>
            <person name="Yamamoto J."/>
            <person name="Saito K."/>
            <person name="Kawai Y."/>
            <person name="Isono Y."/>
            <person name="Nakamura Y."/>
            <person name="Nagahari K."/>
            <person name="Murakami K."/>
            <person name="Yasuda T."/>
            <person name="Iwayanagi T."/>
            <person name="Wagatsuma M."/>
            <person name="Shiratori A."/>
            <person name="Sudo H."/>
            <person name="Hosoiri T."/>
            <person name="Kaku Y."/>
            <person name="Kodaira H."/>
            <person name="Kondo H."/>
            <person name="Sugawara M."/>
            <person name="Takahashi M."/>
            <person name="Kanda K."/>
            <person name="Yokoi T."/>
            <person name="Furuya T."/>
            <person name="Kikkawa E."/>
            <person name="Omura Y."/>
            <person name="Abe K."/>
            <person name="Kamihara K."/>
            <person name="Katsuta N."/>
            <person name="Sato K."/>
            <person name="Tanikawa M."/>
            <person name="Yamazaki M."/>
            <person name="Ninomiya K."/>
            <person name="Ishibashi T."/>
            <person name="Yamashita H."/>
            <person name="Murakawa K."/>
            <person name="Fujimori K."/>
            <person name="Tanai H."/>
            <person name="Kimata M."/>
            <person name="Watanabe M."/>
            <person name="Hiraoka S."/>
            <person name="Chiba Y."/>
            <person name="Ishida S."/>
            <person name="Ono Y."/>
            <person name="Takiguchi S."/>
            <person name="Watanabe S."/>
            <person name="Yosida M."/>
            <person name="Hotuta T."/>
            <person name="Kusano J."/>
            <person name="Kanehori K."/>
            <person name="Takahashi-Fujii A."/>
            <person name="Hara H."/>
            <person name="Tanase T.-O."/>
            <person name="Nomura Y."/>
            <person name="Togiya S."/>
            <person name="Komai F."/>
            <person name="Hara R."/>
            <person name="Takeuchi K."/>
            <person name="Arita M."/>
            <person name="Imose N."/>
            <person name="Musashino K."/>
            <person name="Yuuki H."/>
            <person name="Oshima A."/>
            <person name="Sasaki N."/>
            <person name="Aotsuka S."/>
            <person name="Yoshikawa Y."/>
            <person name="Matsunawa H."/>
            <person name="Ichihara T."/>
            <person name="Shiohata N."/>
            <person name="Sano S."/>
            <person name="Moriya S."/>
            <person name="Momiyama H."/>
            <person name="Satoh N."/>
            <person name="Takami S."/>
            <person name="Terashima Y."/>
            <person name="Suzuki O."/>
            <person name="Nakagawa S."/>
            <person name="Senoh A."/>
            <person name="Mizoguchi H."/>
            <person name="Goto Y."/>
            <person name="Shimizu F."/>
            <person name="Wakebe H."/>
            <person name="Hishigaki H."/>
            <person name="Watanabe T."/>
            <person name="Sugiyama A."/>
            <person name="Takemoto M."/>
            <person name="Kawakami B."/>
            <person name="Yamazaki M."/>
            <person name="Watanabe K."/>
            <person name="Kumagai A."/>
            <person name="Itakura S."/>
            <person name="Fukuzumi Y."/>
            <person name="Fujimori Y."/>
            <person name="Komiyama M."/>
            <person name="Tashiro H."/>
            <person name="Tanigami A."/>
            <person name="Fujiwara T."/>
            <person name="Ono T."/>
            <person name="Yamada K."/>
            <person name="Fujii Y."/>
            <person name="Ozaki K."/>
            <person name="Hirao M."/>
            <person name="Ohmori Y."/>
            <person name="Kawabata A."/>
            <person name="Hikiji T."/>
            <person name="Kobatake N."/>
            <person name="Inagaki H."/>
            <person name="Ikema Y."/>
            <person name="Okamoto S."/>
            <person name="Okitani R."/>
            <person name="Kawakami T."/>
            <person name="Noguchi S."/>
            <person name="Itoh T."/>
            <person name="Shigeta K."/>
            <person name="Senba T."/>
            <person name="Matsumura K."/>
            <person name="Nakajima Y."/>
            <person name="Mizuno T."/>
            <person name="Morinaga M."/>
            <person name="Sasaki M."/>
            <person name="Togashi T."/>
            <person name="Oyama M."/>
            <person name="Hata H."/>
            <person name="Watanabe M."/>
            <person name="Komatsu T."/>
            <person name="Mizushima-Sugano J."/>
            <person name="Satoh T."/>
            <person name="Shirai Y."/>
            <person name="Takahashi Y."/>
            <person name="Nakagawa K."/>
            <person name="Okumura K."/>
            <person name="Nagase T."/>
            <person name="Nomura N."/>
            <person name="Kikuchi H."/>
            <person name="Masuho Y."/>
            <person name="Yamashita R."/>
            <person name="Nakai K."/>
            <person name="Yada T."/>
            <person name="Nakamura Y."/>
            <person name="Ohara O."/>
            <person name="Isogai T."/>
            <person name="Sugano S."/>
        </authorList>
    </citation>
    <scope>NUCLEOTIDE SEQUENCE [LARGE SCALE MRNA] (ISOFORM 3)</scope>
    <source>
        <tissue>Liver</tissue>
    </source>
</reference>
<reference key="5">
    <citation type="journal article" date="2005" name="Biochem. Biophys. Res. Commun.">
        <title>BIP co-chaperone MTJ1/ERDJ1 interacts with inter-alpha-trypsin inhibitor heavy chain 4.</title>
        <authorList>
            <person name="Kroczynska B."/>
            <person name="King-Simmons L."/>
            <person name="Alloza L."/>
            <person name="Alava M.A."/>
            <person name="Elguindi E.C."/>
            <person name="Blond S.Y."/>
        </authorList>
    </citation>
    <scope>NUCLEOTIDE SEQUENCE [MRNA] (ISOFORM 4)</scope>
    <scope>INTERACTION WITH DNAJC1</scope>
</reference>
<reference key="6">
    <citation type="journal article" date="2006" name="Nature">
        <title>The DNA sequence, annotation and analysis of human chromosome 3.</title>
        <authorList>
            <person name="Muzny D.M."/>
            <person name="Scherer S.E."/>
            <person name="Kaul R."/>
            <person name="Wang J."/>
            <person name="Yu J."/>
            <person name="Sudbrak R."/>
            <person name="Buhay C.J."/>
            <person name="Chen R."/>
            <person name="Cree A."/>
            <person name="Ding Y."/>
            <person name="Dugan-Rocha S."/>
            <person name="Gill R."/>
            <person name="Gunaratne P."/>
            <person name="Harris R.A."/>
            <person name="Hawes A.C."/>
            <person name="Hernandez J."/>
            <person name="Hodgson A.V."/>
            <person name="Hume J."/>
            <person name="Jackson A."/>
            <person name="Khan Z.M."/>
            <person name="Kovar-Smith C."/>
            <person name="Lewis L.R."/>
            <person name="Lozado R.J."/>
            <person name="Metzker M.L."/>
            <person name="Milosavljevic A."/>
            <person name="Miner G.R."/>
            <person name="Morgan M.B."/>
            <person name="Nazareth L.V."/>
            <person name="Scott G."/>
            <person name="Sodergren E."/>
            <person name="Song X.-Z."/>
            <person name="Steffen D."/>
            <person name="Wei S."/>
            <person name="Wheeler D.A."/>
            <person name="Wright M.W."/>
            <person name="Worley K.C."/>
            <person name="Yuan Y."/>
            <person name="Zhang Z."/>
            <person name="Adams C.Q."/>
            <person name="Ansari-Lari M.A."/>
            <person name="Ayele M."/>
            <person name="Brown M.J."/>
            <person name="Chen G."/>
            <person name="Chen Z."/>
            <person name="Clendenning J."/>
            <person name="Clerc-Blankenburg K.P."/>
            <person name="Chen R."/>
            <person name="Chen Z."/>
            <person name="Davis C."/>
            <person name="Delgado O."/>
            <person name="Dinh H.H."/>
            <person name="Dong W."/>
            <person name="Draper H."/>
            <person name="Ernst S."/>
            <person name="Fu G."/>
            <person name="Gonzalez-Garay M.L."/>
            <person name="Garcia D.K."/>
            <person name="Gillett W."/>
            <person name="Gu J."/>
            <person name="Hao B."/>
            <person name="Haugen E."/>
            <person name="Havlak P."/>
            <person name="He X."/>
            <person name="Hennig S."/>
            <person name="Hu S."/>
            <person name="Huang W."/>
            <person name="Jackson L.R."/>
            <person name="Jacob L.S."/>
            <person name="Kelly S.H."/>
            <person name="Kube M."/>
            <person name="Levy R."/>
            <person name="Li Z."/>
            <person name="Liu B."/>
            <person name="Liu J."/>
            <person name="Liu W."/>
            <person name="Lu J."/>
            <person name="Maheshwari M."/>
            <person name="Nguyen B.-V."/>
            <person name="Okwuonu G.O."/>
            <person name="Palmeiri A."/>
            <person name="Pasternak S."/>
            <person name="Perez L.M."/>
            <person name="Phelps K.A."/>
            <person name="Plopper F.J."/>
            <person name="Qiang B."/>
            <person name="Raymond C."/>
            <person name="Rodriguez R."/>
            <person name="Saenphimmachak C."/>
            <person name="Santibanez J."/>
            <person name="Shen H."/>
            <person name="Shen Y."/>
            <person name="Subramanian S."/>
            <person name="Tabor P.E."/>
            <person name="Verduzco D."/>
            <person name="Waldron L."/>
            <person name="Wang J."/>
            <person name="Wang J."/>
            <person name="Wang Q."/>
            <person name="Williams G.A."/>
            <person name="Wong G.K.-S."/>
            <person name="Yao Z."/>
            <person name="Zhang J."/>
            <person name="Zhang X."/>
            <person name="Zhao G."/>
            <person name="Zhou J."/>
            <person name="Zhou Y."/>
            <person name="Nelson D."/>
            <person name="Lehrach H."/>
            <person name="Reinhardt R."/>
            <person name="Naylor S.L."/>
            <person name="Yang H."/>
            <person name="Olson M."/>
            <person name="Weinstock G."/>
            <person name="Gibbs R.A."/>
        </authorList>
    </citation>
    <scope>NUCLEOTIDE SEQUENCE [LARGE SCALE GENOMIC DNA]</scope>
</reference>
<reference key="7">
    <citation type="submission" date="1999-01" db="EMBL/GenBank/DDBJ databases">
        <title>Functional prediction of the coding sequences of 79 new genes deduced by analysis of cDNA clones from human fetal liver.</title>
        <authorList>
            <person name="Zhang C."/>
            <person name="Yu Y."/>
            <person name="Zhang S."/>
            <person name="Wei H."/>
            <person name="Zhang Y."/>
            <person name="Zhou G."/>
            <person name="Bi J."/>
            <person name="Liu M."/>
            <person name="He F."/>
        </authorList>
    </citation>
    <scope>NUCLEOTIDE SEQUENCE [LARGE SCALE MRNA] OF 271-930 (ISOFORM 2)</scope>
    <source>
        <tissue>Fetal liver</tissue>
    </source>
</reference>
<reference key="8">
    <citation type="journal article" date="1995" name="J. Biochem.">
        <title>Purification and characterization of a novel glycoprotein which has significant homology to heavy chains of inter-alpha-trypsin inhibitor family from human plasma.</title>
        <authorList>
            <person name="Choi-Miura N.-H."/>
            <person name="Sano Y."/>
            <person name="Oda E."/>
            <person name="Nakano Y."/>
            <person name="Tobe T."/>
            <person name="Yanagishita T."/>
            <person name="Taniyama M."/>
            <person name="Katagiri T."/>
            <person name="Tomita M."/>
        </authorList>
    </citation>
    <scope>PROTEIN SEQUENCE OF 29-44; 99-119; 140-151; 163-170; 194-208; 211-243; 274-281; 290-329; 429-487; 497-567; 608-626 AND 816-831</scope>
    <scope>PROTEOLYTIC PROCESSING</scope>
    <scope>GLYCOSYLATION</scope>
    <source>
        <tissue>Plasma</tissue>
    </source>
</reference>
<reference key="9">
    <citation type="journal article" date="1994" name="Biochim. Biophys. Acta">
        <title>Purification and characterization of a novel substrate for plasma kallikrein (PK-120) in human plasma.</title>
        <authorList>
            <person name="Pu X.P."/>
            <person name="Iwamoto A."/>
            <person name="Nishimura H."/>
            <person name="Nagasawa S."/>
        </authorList>
    </citation>
    <scope>PARTIAL PROTEIN SEQUENCE</scope>
    <scope>PROTEOLYTIC PROCESSING</scope>
</reference>
<reference key="10">
    <citation type="journal article" date="1999" name="Biochem. Biophys. Res. Commun.">
        <title>ITIH4 serum concentration increases during acute-phase processes in human patients and is up-regulated by interleukin-6 in hepatocarcinoma HepG2 cells.</title>
        <authorList>
            <person name="Pineiro M."/>
            <person name="Alava M.A."/>
            <person name="Gonzalez-Ramon N."/>
            <person name="Osada J."/>
            <person name="Lasierra P."/>
            <person name="Larrad L."/>
            <person name="Pineiro A."/>
            <person name="Lampreave F."/>
        </authorList>
    </citation>
    <scope>IDENTIFICATION</scope>
    <scope>INDUCTION</scope>
</reference>
<reference key="11">
    <citation type="journal article" date="2003" name="Nat. Biotechnol.">
        <title>Identification and quantification of N-linked glycoproteins using hydrazide chemistry, stable isotope labeling and mass spectrometry.</title>
        <authorList>
            <person name="Zhang H."/>
            <person name="Li X.-J."/>
            <person name="Martin D.B."/>
            <person name="Aebersold R."/>
        </authorList>
    </citation>
    <scope>GLYCOSYLATION AT ASN-207</scope>
</reference>
<reference key="12">
    <citation type="journal article" date="2004" name="Proteomics">
        <title>Screening for N-glycosylated proteins by liquid chromatography mass spectrometry.</title>
        <authorList>
            <person name="Bunkenborg J."/>
            <person name="Pilch B.J."/>
            <person name="Podtelejnikov A.V."/>
            <person name="Wisniewski J.R."/>
        </authorList>
    </citation>
    <scope>GLYCOSYLATION [LARGE SCALE ANALYSIS] AT ASN-517</scope>
    <source>
        <tissue>Plasma</tissue>
    </source>
</reference>
<reference key="13">
    <citation type="journal article" date="2005" name="J. Proteome Res.">
        <title>Human plasma N-glycoproteome analysis by immunoaffinity subtraction, hydrazide chemistry, and mass spectrometry.</title>
        <authorList>
            <person name="Liu T."/>
            <person name="Qian W.-J."/>
            <person name="Gritsenko M.A."/>
            <person name="Camp D.G. II"/>
            <person name="Monroe M.E."/>
            <person name="Moore R.J."/>
            <person name="Smith R.D."/>
        </authorList>
    </citation>
    <scope>GLYCOSYLATION [LARGE SCALE ANALYSIS] AT ASN-81; ASN-207; ASN-517 AND ASN-577</scope>
    <source>
        <tissue>Plasma</tissue>
    </source>
</reference>
<reference key="14">
    <citation type="journal article" date="2009" name="Clin. Chim. Acta">
        <title>Inter-alpha-trypsin inhibitor heavy chain 4 is a novel marker of acute ischemic stroke.</title>
        <authorList>
            <person name="Kashyap R.S."/>
            <person name="Nayak A.R."/>
            <person name="Deshpande P.S."/>
            <person name="Kabra D."/>
            <person name="Purohit H.J."/>
            <person name="Taori G.M."/>
            <person name="Daginawala H.F."/>
        </authorList>
    </citation>
    <scope>FUNCTION</scope>
    <scope>INDUCTION</scope>
</reference>
<reference key="15">
    <citation type="journal article" date="2009" name="J. Proteome Res.">
        <title>Glycoproteomics analysis of human liver tissue by combination of multiple enzyme digestion and hydrazide chemistry.</title>
        <authorList>
            <person name="Chen R."/>
            <person name="Jiang X."/>
            <person name="Sun D."/>
            <person name="Han G."/>
            <person name="Wang F."/>
            <person name="Ye M."/>
            <person name="Wang L."/>
            <person name="Zou H."/>
        </authorList>
    </citation>
    <scope>GLYCOSYLATION [LARGE SCALE ANALYSIS] AT ASN-81; ASN-207 AND ASN-517</scope>
    <source>
        <tissue>Liver</tissue>
    </source>
</reference>
<reference key="16">
    <citation type="journal article" date="2010" name="Proteomics Clin. Appl.">
        <title>The absolute quantification of eight inter-alpha-trypsin inhibitor heavy chain 4 (ITIH4)-derived peptides in serum from breast cancer patients.</title>
        <authorList>
            <person name="van den Broek I."/>
            <person name="Sparidans R.W."/>
            <person name="van Winden A.W."/>
            <person name="Gast M.C."/>
            <person name="van Dulken E.J."/>
            <person name="Schellens J.H."/>
            <person name="Beijnen J.H."/>
        </authorList>
    </citation>
    <scope>POSSIBLE ROLE OF ACTIVE PEPTIDE AS A BIOMARKER FOR BREAST CANCER</scope>
</reference>
<reference key="17">
    <citation type="journal article" date="2011" name="BMC Syst. Biol.">
        <title>Initial characterization of the human central proteome.</title>
        <authorList>
            <person name="Burkard T.R."/>
            <person name="Planyavsky M."/>
            <person name="Kaupe I."/>
            <person name="Breitwieser F.P."/>
            <person name="Buerckstuemmer T."/>
            <person name="Bennett K.L."/>
            <person name="Superti-Furga G."/>
            <person name="Colinge J."/>
        </authorList>
    </citation>
    <scope>IDENTIFICATION BY MASS SPECTROMETRY [LARGE SCALE ANALYSIS]</scope>
</reference>
<reference key="18">
    <citation type="journal article" date="2012" name="Mol. Cell. Proteomics">
        <title>Human urinary glycoproteomics; attachment site specific analysis of N- and O-linked glycosylations by CID and ECD.</title>
        <authorList>
            <person name="Halim A."/>
            <person name="Nilsson J."/>
            <person name="Ruetschi U."/>
            <person name="Hesse C."/>
            <person name="Larson G."/>
        </authorList>
    </citation>
    <scope>GLYCOSYLATION AT THR-720</scope>
    <scope>STRUCTURE OF CARBOHYDRATES</scope>
    <scope>IDENTIFICATION BY MASS SPECTROMETRY</scope>
</reference>
<reference key="19">
    <citation type="journal article" date="2014" name="J. Proteome Res.">
        <title>Site-specific glycan microheterogeneity of inter-alpha-trypsin inhibitor heavy chain H4.</title>
        <authorList>
            <person name="Chandler K.B."/>
            <person name="Brnakova Z."/>
            <person name="Sanda M."/>
            <person name="Wang S."/>
            <person name="Stalnaker S.H."/>
            <person name="Bridger R."/>
            <person name="Zhao P."/>
            <person name="Wells L."/>
            <person name="Edwards N.J."/>
            <person name="Goldman R."/>
        </authorList>
    </citation>
    <scope>GLYCOSYLATION AT ASN-81; ASN-207; ASN-274; ASN-517 AND ASN-577</scope>
    <scope>IDENTIFICATION BY MASS SPECTROMETRY</scope>
</reference>
<reference key="20">
    <citation type="journal article" date="2014" name="J. Proteomics">
        <title>An enzyme assisted RP-RPLC approach for in-depth analysis of human liver phosphoproteome.</title>
        <authorList>
            <person name="Bian Y."/>
            <person name="Song C."/>
            <person name="Cheng K."/>
            <person name="Dong M."/>
            <person name="Wang F."/>
            <person name="Huang J."/>
            <person name="Sun D."/>
            <person name="Wang L."/>
            <person name="Ye M."/>
            <person name="Zou H."/>
        </authorList>
    </citation>
    <scope>IDENTIFICATION BY MASS SPECTROMETRY [LARGE SCALE ANALYSIS]</scope>
    <source>
        <tissue>Liver</tissue>
    </source>
</reference>
<reference key="21">
    <citation type="journal article" date="2002" name="BMC Med. Genet.">
        <title>SNP analysis of the inter-alpha-trypsin inhibitor family heavy chain-related protein (IHRP) gene by a fluorescence-adapted SSCP method.</title>
        <authorList>
            <person name="Tozaki T."/>
            <person name="Choi-Miura N.-H."/>
            <person name="Taniyama M."/>
            <person name="Kurosawa M."/>
            <person name="Tomita M."/>
        </authorList>
    </citation>
    <scope>VARIANT ASN-86</scope>
</reference>
<keyword id="KW-0002">3D-structure</keyword>
<keyword id="KW-0011">Acute phase</keyword>
<keyword id="KW-0025">Alternative splicing</keyword>
<keyword id="KW-0903">Direct protein sequencing</keyword>
<keyword id="KW-1015">Disulfide bond</keyword>
<keyword id="KW-0325">Glycoprotein</keyword>
<keyword id="KW-0646">Protease inhibitor</keyword>
<keyword id="KW-1267">Proteomics identification</keyword>
<keyword id="KW-1185">Reference proteome</keyword>
<keyword id="KW-0964">Secreted</keyword>
<keyword id="KW-0722">Serine protease inhibitor</keyword>
<keyword id="KW-0732">Signal</keyword>
<feature type="signal peptide" evidence="15">
    <location>
        <begin position="1"/>
        <end position="28"/>
    </location>
</feature>
<feature type="chain" id="PRO_0000016541" description="70 kDa inter-alpha-trypsin inhibitor heavy chain H4">
    <location>
        <begin position="29"/>
        <end position="661"/>
    </location>
</feature>
<feature type="propeptide" id="PRO_0000016542" description="Potentially active peptide">
    <location>
        <begin position="662"/>
        <end position="688"/>
    </location>
</feature>
<feature type="chain" id="PRO_0000016543" description="35 kDa inter-alpha-trypsin inhibitor heavy chain H4">
    <location>
        <begin position="689"/>
        <end position="930"/>
    </location>
</feature>
<feature type="domain" description="VIT" evidence="3">
    <location>
        <begin position="29"/>
        <end position="148"/>
    </location>
</feature>
<feature type="domain" description="VWFA" evidence="2">
    <location>
        <begin position="272"/>
        <end position="432"/>
    </location>
</feature>
<feature type="region of interest" description="Disordered" evidence="4">
    <location>
        <begin position="595"/>
        <end position="618"/>
    </location>
</feature>
<feature type="region of interest" description="Proline-rich (PRR) potential bioactive peptide">
    <location>
        <begin position="658"/>
        <end position="688"/>
    </location>
</feature>
<feature type="region of interest" description="O-glycosylated at three sites">
    <location>
        <begin position="719"/>
        <end position="725"/>
    </location>
</feature>
<feature type="site" description="Cleavage; by kallikrein">
    <location>
        <begin position="688"/>
        <end position="689"/>
    </location>
</feature>
<feature type="glycosylation site" description="N-linked (GlcNAc...) asparagine" evidence="10 11 14">
    <location>
        <position position="81"/>
    </location>
</feature>
<feature type="glycosylation site" description="N-linked (GlcNAc...) asparagine" evidence="7 10 11 14">
    <location>
        <position position="207"/>
    </location>
</feature>
<feature type="glycosylation site" description="N-linked (GlcNAc...) asparagine; atypical" evidence="14">
    <location>
        <position position="274"/>
    </location>
</feature>
<feature type="glycosylation site" description="N-linked (GlcNAc...) asparagine" evidence="8 10 11 14">
    <location>
        <position position="517"/>
    </location>
</feature>
<feature type="glycosylation site" description="N-linked (GlcNAc...) asparagine" evidence="10 14">
    <location>
        <position position="577"/>
    </location>
</feature>
<feature type="glycosylation site" description="O-linked (GalNAc...) threonine" evidence="1">
    <location>
        <position position="719"/>
    </location>
</feature>
<feature type="glycosylation site" description="O-linked (GalNAc...) threonine" evidence="13">
    <location>
        <position position="720"/>
    </location>
</feature>
<feature type="glycosylation site" description="O-linked (GalNAc...) threonine" evidence="1">
    <location>
        <position position="722"/>
    </location>
</feature>
<feature type="disulfide bond" evidence="21">
    <location>
        <begin position="747"/>
        <end position="925"/>
    </location>
</feature>
<feature type="splice variant" id="VSP_002761" description="In isoform 2, isoform 3 and isoform 4." evidence="18 19 20">
    <location>
        <begin position="621"/>
        <end position="650"/>
    </location>
</feature>
<feature type="splice variant" id="VSP_044764" description="In isoform 4." evidence="19">
    <location>
        <begin position="727"/>
        <end position="765"/>
    </location>
</feature>
<feature type="splice variant" id="VSP_002762" description="In isoform 2." evidence="20">
    <original>A</original>
    <variation>ACPSCSRSRAPAVPA</variation>
    <location>
        <position position="727"/>
    </location>
</feature>
<feature type="splice variant" id="VSP_044765" description="In isoform 4." evidence="19">
    <location>
        <begin position="851"/>
        <end position="866"/>
    </location>
</feature>
<feature type="sequence variant" id="VAR_027869" description="In dbSNP:rs13072536." evidence="16">
    <original>I</original>
    <variation>N</variation>
    <location>
        <position position="85"/>
    </location>
</feature>
<feature type="sequence variant" id="VAR_013836" evidence="6">
    <original>I</original>
    <variation>N</variation>
    <location>
        <position position="86"/>
    </location>
</feature>
<feature type="sequence variant" id="VAR_027870" description="In dbSNP:rs2276814.">
    <original>Q</original>
    <variation>L</variation>
    <location>
        <position position="669"/>
    </location>
</feature>
<feature type="sequence variant" id="VAR_027871" description="In dbSNP:rs4687657.">
    <original>P</original>
    <variation>T</variation>
    <location>
        <position position="698"/>
    </location>
</feature>
<feature type="sequence variant" id="VAR_027872" description="In dbSNP:rs2256734.">
    <original>M</original>
    <variation>I</variation>
    <location>
        <position position="714"/>
    </location>
</feature>
<feature type="sequence variant" id="VAR_027873" description="In dbSNP:rs2535621.">
    <original>L</original>
    <variation>P</variation>
    <location>
        <position position="791"/>
    </location>
</feature>
<feature type="sequence conflict" description="In Ref. 3; AAD05198." evidence="21" ref="3">
    <original>I</original>
    <variation>K</variation>
    <location>
        <position position="85"/>
    </location>
</feature>
<feature type="sequence conflict" description="In Ref. 2; BAA07602." evidence="21" ref="2">
    <original>S</original>
    <variation>N</variation>
    <location>
        <position position="114"/>
    </location>
</feature>
<feature type="sequence conflict" description="In Ref. 8; AA sequence." evidence="21" ref="8">
    <original>N</original>
    <variation>F</variation>
    <location>
        <position position="207"/>
    </location>
</feature>
<feature type="sequence conflict" description="In Ref. 8; AA sequence." evidence="21" ref="8">
    <original>Q</original>
    <variation>E</variation>
    <location>
        <position position="221"/>
    </location>
</feature>
<feature type="sequence conflict" description="In Ref. 8; AA sequence." evidence="21" ref="8">
    <original>R</original>
    <variation>V</variation>
    <location>
        <position position="307"/>
    </location>
</feature>
<feature type="sequence conflict" description="In Ref. 8; AA sequence." evidence="21" ref="8">
    <original>W</original>
    <variation>Y</variation>
    <location>
        <position position="322"/>
    </location>
</feature>
<feature type="sequence conflict" description="In Ref. 6; BAH12781." evidence="21" ref="6">
    <original>E</original>
    <variation>G</variation>
    <location>
        <position position="370"/>
    </location>
</feature>
<feature type="sequence conflict" description="In Ref. 8; AA sequence." evidence="21" ref="8">
    <original>ET</original>
    <variation>QR</variation>
    <location>
        <begin position="816"/>
        <end position="817"/>
    </location>
</feature>
<feature type="sequence conflict" description="In Ref. 3; no nucleotide entry." evidence="21" ref="3">
    <original>S</original>
    <variation>F</variation>
    <location>
        <position position="905"/>
    </location>
</feature>
<feature type="sequence conflict" description="In Ref. 3; no nucleotide entry." evidence="21" ref="3">
    <original>S</original>
    <variation>T</variation>
    <location>
        <position position="927"/>
    </location>
</feature>
<feature type="strand" evidence="24">
    <location>
        <begin position="273"/>
        <end position="280"/>
    </location>
</feature>
<feature type="helix" evidence="24">
    <location>
        <begin position="283"/>
        <end position="285"/>
    </location>
</feature>
<feature type="helix" evidence="24">
    <location>
        <begin position="288"/>
        <end position="302"/>
    </location>
</feature>
<feature type="strand" evidence="24">
    <location>
        <begin position="309"/>
        <end position="325"/>
    </location>
</feature>
<feature type="helix" evidence="24">
    <location>
        <begin position="331"/>
        <end position="343"/>
    </location>
</feature>
<feature type="helix" evidence="24">
    <location>
        <begin position="352"/>
        <end position="364"/>
    </location>
</feature>
<feature type="helix" evidence="24">
    <location>
        <begin position="365"/>
        <end position="367"/>
    </location>
</feature>
<feature type="turn" evidence="24">
    <location>
        <begin position="372"/>
        <end position="375"/>
    </location>
</feature>
<feature type="strand" evidence="24">
    <location>
        <begin position="376"/>
        <end position="386"/>
    </location>
</feature>
<feature type="helix" evidence="24">
    <location>
        <begin position="395"/>
        <end position="406"/>
    </location>
</feature>
<feature type="strand" evidence="24">
    <location>
        <begin position="409"/>
        <end position="421"/>
    </location>
</feature>
<feature type="helix" evidence="24">
    <location>
        <begin position="423"/>
        <end position="431"/>
    </location>
</feature>
<feature type="turn" evidence="24">
    <location>
        <begin position="432"/>
        <end position="434"/>
    </location>
</feature>
<feature type="strand" evidence="24">
    <location>
        <begin position="437"/>
        <end position="440"/>
    </location>
</feature>
<feature type="helix" evidence="24">
    <location>
        <begin position="446"/>
        <end position="457"/>
    </location>
</feature>
<organism>
    <name type="scientific">Homo sapiens</name>
    <name type="common">Human</name>
    <dbReference type="NCBI Taxonomy" id="9606"/>
    <lineage>
        <taxon>Eukaryota</taxon>
        <taxon>Metazoa</taxon>
        <taxon>Chordata</taxon>
        <taxon>Craniata</taxon>
        <taxon>Vertebrata</taxon>
        <taxon>Euteleostomi</taxon>
        <taxon>Mammalia</taxon>
        <taxon>Eutheria</taxon>
        <taxon>Euarchontoglires</taxon>
        <taxon>Primates</taxon>
        <taxon>Haplorrhini</taxon>
        <taxon>Catarrhini</taxon>
        <taxon>Hominidae</taxon>
        <taxon>Homo</taxon>
    </lineage>
</organism>
<comment type="function">
    <text evidence="12">Type II acute-phase protein (APP) involved in inflammatory responses to trauma. May also play a role in liver development or regeneration.</text>
</comment>
<comment type="subunit">
    <text evidence="9">Interacts (via C-terminus) with DNAJC1 (via SANT 2 domain); this interaction protects ITIH4 against cleavage by kallikrein in vitro.</text>
</comment>
<comment type="subcellular location">
    <subcellularLocation>
        <location>Secreted</location>
    </subcellularLocation>
</comment>
<comment type="alternative products">
    <event type="alternative splicing"/>
    <isoform>
        <id>Q14624-1</id>
        <name>1</name>
        <sequence type="displayed"/>
    </isoform>
    <isoform>
        <id>Q14624-2</id>
        <name>2</name>
        <sequence type="described" ref="VSP_002761 VSP_002762"/>
    </isoform>
    <isoform>
        <id>Q14624-3</id>
        <name>3</name>
        <sequence type="described" ref="VSP_002761"/>
    </isoform>
    <isoform>
        <id>Q14624-4</id>
        <name>4</name>
        <sequence type="described" ref="VSP_002761 VSP_044764 VSP_044765"/>
    </isoform>
</comment>
<comment type="tissue specificity">
    <text evidence="16 17">Liver specific.</text>
</comment>
<comment type="induction">
    <text evidence="5 12">Levels increase from 1.4 to 3-fold in acute-phase processes such as in acute ischemia stroke (AIS), unstable angina and programmed surgery. In hepatocytes, induced by IL6 but not by other cytokines such as IL1B.</text>
</comment>
<comment type="PTM">
    <text>Cleaved by plasma kallikrein to yield 100 kDa and 35 kDa fragments, and the resulting 100 kDa fragment is further converted to a 70 kDa fragment.</text>
</comment>
<comment type="PTM">
    <text evidence="7 8 10 11 13 15">N- and O-glycosylated. In urine, O-linked glycosylation on threonine residues in the region from Thr-719 to Thr-725 consists of core 1 or possibly core 8 glycans. Mainly Hex(HexNAc)(2), but also some Hex(3)(HexNAc)(3). N-glycosylated but not O-glycosylated in plasma.</text>
</comment>
<comment type="miscellaneous">
    <text evidence="22 23">Possible biomarker for acute ischemic stroke (PubMed:19263524). Peptides derived from the proline-rich potentially active peptide (PRO_0000016542) may be biomarkers for a variety of disease states including breast cancer (PubMed:21137033).</text>
</comment>
<comment type="similarity">
    <text evidence="21">Belongs to the ITIH family.</text>
</comment>
<name>ITIH4_HUMAN</name>
<proteinExistence type="evidence at protein level"/>
<sequence length="930" mass="103357">MKPPRPVRTCSKVLVLLSLLAIHQTTTAEKNGIDIYSLTVDSRVSSRFAHTVVTSRVVNRANTVQEATFQMELPKKAFITNFSMIIDGMTYPGIIKEKAEAQAQYSAAVAKGKSAGLVKATGRNMEQFQVSVSVAPNAKITFELVYEELLKRRLGVYELLLKVRPQQLVKHLQMDIHIFEPQGISFLETESTFMTNQLVDALTTWQNKTKAHIRFKPTLSQQQKSPEQQETVLDGNLIIRYDVDRAISGGSIQIENGYFVHYFAPEGLTTMPKNVVFVIDKSGSMSGRKIQQTREALIKILDDLSPRDQFNLIVFSTEATQWRPSLVPASAENVNKARSFAAGIQALGGTNINDAMLMAVQLLDSSNQEERLPEGSVSLIILLTDGDPTVGETNPRSIQNNVREAVSGRYSLFCLGFGFDVSYAFLEKLALDNGGLARRIHEDSDSALQLQDFYQEVANPLLTAVTFEYPSNAVEEVTQNNFRLLFKGSEMVVAGKLQDRGPDVLTATVSGKLPTQNITFQTESSVAEQEAEFQSPKYIFHNFMERLWAYLTIQQLLEQTVSASDADQQALRNQALNLSLAYSFVTPLTSMVVTKPDDQEQSQVAEKPMEGESRNRNVHSGSTFFKYYLQGAKIPKPEASFSPRRGWNRQAGAAGSRMNFRPGVLSSRQLGLPGPPDVPDHAAYHPFRRLAILPASAPPATSNPDPAVSRVMNMKIEETTMTTQTPAPIQAPSAILPLPGQSVERLCVDPRHRQGPVNLLSDPEQGVEVTGQYEREKAGFSWIEVTFKNPLVWVHASPEHVVVTRNRRSSAYKWKETLFSVMPGLKMTMDKTGLLLLSDPDKVTIGLLFWDGRGEGLRLLLRDTDRFSSHVGGTLGQFYQEVLWGSPAASDDGRRTLRVQGNDHSATRERRLDYQEGPPGVEISCWSVEL</sequence>
<evidence type="ECO:0000250" key="1">
    <source>
        <dbReference type="UniProtKB" id="Q3T052"/>
    </source>
</evidence>
<evidence type="ECO:0000255" key="2">
    <source>
        <dbReference type="PROSITE-ProRule" id="PRU00219"/>
    </source>
</evidence>
<evidence type="ECO:0000255" key="3">
    <source>
        <dbReference type="PROSITE-ProRule" id="PRU00801"/>
    </source>
</evidence>
<evidence type="ECO:0000256" key="4">
    <source>
        <dbReference type="SAM" id="MobiDB-lite"/>
    </source>
</evidence>
<evidence type="ECO:0000269" key="5">
    <source>
    </source>
</evidence>
<evidence type="ECO:0000269" key="6">
    <source>
    </source>
</evidence>
<evidence type="ECO:0000269" key="7">
    <source>
    </source>
</evidence>
<evidence type="ECO:0000269" key="8">
    <source>
    </source>
</evidence>
<evidence type="ECO:0000269" key="9">
    <source>
    </source>
</evidence>
<evidence type="ECO:0000269" key="10">
    <source>
    </source>
</evidence>
<evidence type="ECO:0000269" key="11">
    <source>
    </source>
</evidence>
<evidence type="ECO:0000269" key="12">
    <source>
    </source>
</evidence>
<evidence type="ECO:0000269" key="13">
    <source>
    </source>
</evidence>
<evidence type="ECO:0000269" key="14">
    <source>
    </source>
</evidence>
<evidence type="ECO:0000269" key="15">
    <source>
    </source>
</evidence>
<evidence type="ECO:0000269" key="16">
    <source>
    </source>
</evidence>
<evidence type="ECO:0000269" key="17">
    <source>
    </source>
</evidence>
<evidence type="ECO:0000303" key="18">
    <source>
    </source>
</evidence>
<evidence type="ECO:0000303" key="19">
    <source>
    </source>
</evidence>
<evidence type="ECO:0000303" key="20">
    <source ref="7"/>
</evidence>
<evidence type="ECO:0000305" key="21"/>
<evidence type="ECO:0000305" key="22">
    <source>
    </source>
</evidence>
<evidence type="ECO:0000305" key="23">
    <source>
    </source>
</evidence>
<evidence type="ECO:0007829" key="24">
    <source>
        <dbReference type="PDB" id="9C4F"/>
    </source>
</evidence>
<accession>Q14624</accession>
<accession>B7Z545</accession>
<accession>E9PGN5</accession>
<accession>Q15135</accession>
<accession>Q9P190</accession>
<accession>Q9UQ54</accession>
<dbReference type="EMBL" id="D38535">
    <property type="protein sequence ID" value="BAA07536.1"/>
    <property type="molecule type" value="mRNA"/>
</dbReference>
<dbReference type="EMBL" id="D38595">
    <property type="protein sequence ID" value="BAA07602.1"/>
    <property type="molecule type" value="mRNA"/>
</dbReference>
<dbReference type="EMBL" id="U43163">
    <property type="protein sequence ID" value="AAD05198.1"/>
    <property type="molecule type" value="Genomic_DNA"/>
</dbReference>
<dbReference type="EMBL" id="U42015">
    <property type="protein sequence ID" value="AAD05198.1"/>
    <property type="status" value="JOINED"/>
    <property type="molecule type" value="Genomic_DNA"/>
</dbReference>
<dbReference type="EMBL" id="U42016">
    <property type="protein sequence ID" value="AAD05198.1"/>
    <property type="status" value="JOINED"/>
    <property type="molecule type" value="Genomic_DNA"/>
</dbReference>
<dbReference type="EMBL" id="U43155">
    <property type="protein sequence ID" value="AAD05198.1"/>
    <property type="status" value="JOINED"/>
    <property type="molecule type" value="Genomic_DNA"/>
</dbReference>
<dbReference type="EMBL" id="U43156">
    <property type="protein sequence ID" value="AAD05198.1"/>
    <property type="status" value="JOINED"/>
    <property type="molecule type" value="Genomic_DNA"/>
</dbReference>
<dbReference type="EMBL" id="U43157">
    <property type="protein sequence ID" value="AAD05198.1"/>
    <property type="status" value="JOINED"/>
    <property type="molecule type" value="Genomic_DNA"/>
</dbReference>
<dbReference type="EMBL" id="U43158">
    <property type="protein sequence ID" value="AAD05198.1"/>
    <property type="status" value="JOINED"/>
    <property type="molecule type" value="Genomic_DNA"/>
</dbReference>
<dbReference type="EMBL" id="U43159">
    <property type="protein sequence ID" value="AAD05198.1"/>
    <property type="status" value="JOINED"/>
    <property type="molecule type" value="Genomic_DNA"/>
</dbReference>
<dbReference type="EMBL" id="U43160">
    <property type="protein sequence ID" value="AAD05198.1"/>
    <property type="status" value="JOINED"/>
    <property type="molecule type" value="Genomic_DNA"/>
</dbReference>
<dbReference type="EMBL" id="U43161">
    <property type="protein sequence ID" value="AAD05198.1"/>
    <property type="status" value="JOINED"/>
    <property type="molecule type" value="Genomic_DNA"/>
</dbReference>
<dbReference type="EMBL" id="U43162">
    <property type="protein sequence ID" value="AAD05198.1"/>
    <property type="status" value="JOINED"/>
    <property type="molecule type" value="Genomic_DNA"/>
</dbReference>
<dbReference type="EMBL" id="AK298412">
    <property type="protein sequence ID" value="BAH12781.1"/>
    <property type="molecule type" value="mRNA"/>
</dbReference>
<dbReference type="EMBL" id="AC006254">
    <property type="status" value="NOT_ANNOTATED_CDS"/>
    <property type="molecule type" value="Genomic_DNA"/>
</dbReference>
<dbReference type="EMBL" id="AC099667">
    <property type="status" value="NOT_ANNOTATED_CDS"/>
    <property type="molecule type" value="Genomic_DNA"/>
</dbReference>
<dbReference type="EMBL" id="AF119856">
    <property type="protein sequence ID" value="AAF69610.1"/>
    <property type="molecule type" value="mRNA"/>
</dbReference>
<dbReference type="CCDS" id="CCDS2865.1">
    <molecule id="Q14624-1"/>
</dbReference>
<dbReference type="CCDS" id="CCDS54596.1">
    <molecule id="Q14624-3"/>
</dbReference>
<dbReference type="PIR" id="JX0368">
    <property type="entry name" value="JX0368"/>
</dbReference>
<dbReference type="RefSeq" id="NP_001159921.1">
    <molecule id="Q14624-3"/>
    <property type="nucleotide sequence ID" value="NM_001166449.2"/>
</dbReference>
<dbReference type="RefSeq" id="NP_002209.2">
    <molecule id="Q14624-1"/>
    <property type="nucleotide sequence ID" value="NM_002218.4"/>
</dbReference>
<dbReference type="PDB" id="9C4F">
    <property type="method" value="EM"/>
    <property type="resolution" value="3.20 A"/>
    <property type="chains" value="I=1-930"/>
</dbReference>
<dbReference type="PDB" id="9C4N">
    <property type="method" value="EM"/>
    <property type="resolution" value="2.90 A"/>
    <property type="chains" value="Y=1-930"/>
</dbReference>
<dbReference type="PDBsum" id="9C4F"/>
<dbReference type="PDBsum" id="9C4N"/>
<dbReference type="EMDB" id="EMD-45184"/>
<dbReference type="EMDB" id="EMD-45191"/>
<dbReference type="SMR" id="Q14624"/>
<dbReference type="BioGRID" id="109906">
    <property type="interactions" value="31"/>
</dbReference>
<dbReference type="FunCoup" id="Q14624">
    <property type="interactions" value="156"/>
</dbReference>
<dbReference type="IntAct" id="Q14624">
    <property type="interactions" value="13"/>
</dbReference>
<dbReference type="STRING" id="9606.ENSP00000266041"/>
<dbReference type="DrugBank" id="DB01593">
    <property type="generic name" value="Zinc"/>
</dbReference>
<dbReference type="DrugBank" id="DB14487">
    <property type="generic name" value="Zinc acetate"/>
</dbReference>
<dbReference type="DrugBank" id="DB14533">
    <property type="generic name" value="Zinc chloride"/>
</dbReference>
<dbReference type="DrugBank" id="DB14548">
    <property type="generic name" value="Zinc sulfate, unspecified form"/>
</dbReference>
<dbReference type="CarbonylDB" id="Q14624"/>
<dbReference type="GlyConnect" id="711">
    <property type="glycosylation" value="67 N-Linked glycans (5 sites), 10 O-Linked glycans (3 sites)"/>
</dbReference>
<dbReference type="GlyCosmos" id="Q14624">
    <property type="glycosylation" value="14 sites, 127 glycans"/>
</dbReference>
<dbReference type="GlyGen" id="Q14624">
    <property type="glycosylation" value="17 sites, 177 N-linked glycans (5 sites), 14 O-linked glycans (10 sites)"/>
</dbReference>
<dbReference type="iPTMnet" id="Q14624"/>
<dbReference type="PhosphoSitePlus" id="Q14624"/>
<dbReference type="SwissPalm" id="Q14624"/>
<dbReference type="BioMuta" id="ITIH4"/>
<dbReference type="DMDM" id="229463048"/>
<dbReference type="jPOST" id="Q14624"/>
<dbReference type="MassIVE" id="Q14624"/>
<dbReference type="PaxDb" id="9606-ENSP00000266041"/>
<dbReference type="PeptideAtlas" id="Q14624"/>
<dbReference type="ProteomicsDB" id="20355"/>
<dbReference type="ProteomicsDB" id="60074">
    <molecule id="Q14624-1"/>
</dbReference>
<dbReference type="ProteomicsDB" id="60075">
    <molecule id="Q14624-2"/>
</dbReference>
<dbReference type="Antibodypedia" id="862">
    <property type="antibodies" value="417 antibodies from 35 providers"/>
</dbReference>
<dbReference type="DNASU" id="3700"/>
<dbReference type="Ensembl" id="ENST00000266041.9">
    <molecule id="Q14624-1"/>
    <property type="protein sequence ID" value="ENSP00000266041.4"/>
    <property type="gene ID" value="ENSG00000055955.17"/>
</dbReference>
<dbReference type="Ensembl" id="ENST00000406595.5">
    <molecule id="Q14624-3"/>
    <property type="protein sequence ID" value="ENSP00000384425.1"/>
    <property type="gene ID" value="ENSG00000055955.17"/>
</dbReference>
<dbReference type="GeneID" id="3700"/>
<dbReference type="KEGG" id="hsa:3700"/>
<dbReference type="MANE-Select" id="ENST00000266041.9">
    <property type="protein sequence ID" value="ENSP00000266041.4"/>
    <property type="RefSeq nucleotide sequence ID" value="NM_002218.5"/>
    <property type="RefSeq protein sequence ID" value="NP_002209.2"/>
</dbReference>
<dbReference type="UCSC" id="uc003dfz.4">
    <molecule id="Q14624-1"/>
    <property type="organism name" value="human"/>
</dbReference>
<dbReference type="AGR" id="HGNC:6169"/>
<dbReference type="CTD" id="3700"/>
<dbReference type="DisGeNET" id="3700"/>
<dbReference type="GeneCards" id="ITIH4"/>
<dbReference type="HGNC" id="HGNC:6169">
    <property type="gene designation" value="ITIH4"/>
</dbReference>
<dbReference type="HPA" id="ENSG00000055955">
    <property type="expression patterns" value="Tissue enriched (liver)"/>
</dbReference>
<dbReference type="MalaCards" id="ITIH4"/>
<dbReference type="MIM" id="600564">
    <property type="type" value="gene"/>
</dbReference>
<dbReference type="neXtProt" id="NX_Q14624"/>
<dbReference type="OpenTargets" id="ENSG00000055955"/>
<dbReference type="PharmGKB" id="PA29967"/>
<dbReference type="VEuPathDB" id="HostDB:ENSG00000055955"/>
<dbReference type="eggNOG" id="ENOG502QPS2">
    <property type="taxonomic scope" value="Eukaryota"/>
</dbReference>
<dbReference type="GeneTree" id="ENSGT00940000161039"/>
<dbReference type="HOGENOM" id="CLU_008101_0_0_1"/>
<dbReference type="InParanoid" id="Q14624"/>
<dbReference type="OMA" id="RNSVYKW"/>
<dbReference type="OrthoDB" id="299997at2759"/>
<dbReference type="PAN-GO" id="Q14624">
    <property type="GO annotations" value="0 GO annotations based on evolutionary models"/>
</dbReference>
<dbReference type="PhylomeDB" id="Q14624"/>
<dbReference type="TreeFam" id="TF328982"/>
<dbReference type="PathwayCommons" id="Q14624"/>
<dbReference type="Reactome" id="R-HSA-114608">
    <property type="pathway name" value="Platelet degranulation"/>
</dbReference>
<dbReference type="SignaLink" id="Q14624"/>
<dbReference type="BioGRID-ORCS" id="3700">
    <property type="hits" value="19 hits in 1151 CRISPR screens"/>
</dbReference>
<dbReference type="ChiTaRS" id="ITIH4">
    <property type="organism name" value="human"/>
</dbReference>
<dbReference type="GeneWiki" id="ITIH4"/>
<dbReference type="GenomeRNAi" id="3700"/>
<dbReference type="Pharos" id="Q14624">
    <property type="development level" value="Tbio"/>
</dbReference>
<dbReference type="PRO" id="PR:Q14624"/>
<dbReference type="Proteomes" id="UP000005640">
    <property type="component" value="Chromosome 3"/>
</dbReference>
<dbReference type="RNAct" id="Q14624">
    <property type="molecule type" value="protein"/>
</dbReference>
<dbReference type="Bgee" id="ENSG00000055955">
    <property type="expression patterns" value="Expressed in right lobe of liver and 106 other cell types or tissues"/>
</dbReference>
<dbReference type="ExpressionAtlas" id="Q14624">
    <property type="expression patterns" value="baseline and differential"/>
</dbReference>
<dbReference type="GO" id="GO:0072562">
    <property type="term" value="C:blood microparticle"/>
    <property type="evidence" value="ECO:0007005"/>
    <property type="project" value="UniProtKB"/>
</dbReference>
<dbReference type="GO" id="GO:0062023">
    <property type="term" value="C:collagen-containing extracellular matrix"/>
    <property type="evidence" value="ECO:0007005"/>
    <property type="project" value="BHF-UCL"/>
</dbReference>
<dbReference type="GO" id="GO:0070062">
    <property type="term" value="C:extracellular exosome"/>
    <property type="evidence" value="ECO:0007005"/>
    <property type="project" value="UniProtKB"/>
</dbReference>
<dbReference type="GO" id="GO:0005576">
    <property type="term" value="C:extracellular region"/>
    <property type="evidence" value="ECO:0000304"/>
    <property type="project" value="Reactome"/>
</dbReference>
<dbReference type="GO" id="GO:0005886">
    <property type="term" value="C:plasma membrane"/>
    <property type="evidence" value="ECO:0007669"/>
    <property type="project" value="Ensembl"/>
</dbReference>
<dbReference type="GO" id="GO:0031089">
    <property type="term" value="C:platelet dense granule lumen"/>
    <property type="evidence" value="ECO:0000304"/>
    <property type="project" value="Reactome"/>
</dbReference>
<dbReference type="GO" id="GO:0004866">
    <property type="term" value="F:endopeptidase inhibitor activity"/>
    <property type="evidence" value="ECO:0000304"/>
    <property type="project" value="ProtInc"/>
</dbReference>
<dbReference type="GO" id="GO:0004867">
    <property type="term" value="F:serine-type endopeptidase inhibitor activity"/>
    <property type="evidence" value="ECO:0007669"/>
    <property type="project" value="UniProtKB-KW"/>
</dbReference>
<dbReference type="GO" id="GO:0006953">
    <property type="term" value="P:acute-phase response"/>
    <property type="evidence" value="ECO:0000270"/>
    <property type="project" value="UniProtKB"/>
</dbReference>
<dbReference type="GO" id="GO:0030212">
    <property type="term" value="P:hyaluronan metabolic process"/>
    <property type="evidence" value="ECO:0007669"/>
    <property type="project" value="InterPro"/>
</dbReference>
<dbReference type="GO" id="GO:0034097">
    <property type="term" value="P:response to cytokine"/>
    <property type="evidence" value="ECO:0000270"/>
    <property type="project" value="UniProtKB"/>
</dbReference>
<dbReference type="CDD" id="cd01461">
    <property type="entry name" value="vWA_interalpha_trypsin_inhibitor"/>
    <property type="match status" value="1"/>
</dbReference>
<dbReference type="FunFam" id="3.40.50.410:FF:000013">
    <property type="entry name" value="inter-alpha-trypsin inhibitor heavy chain H2"/>
    <property type="match status" value="1"/>
</dbReference>
<dbReference type="Gene3D" id="3.40.50.410">
    <property type="entry name" value="von Willebrand factor, type A domain"/>
    <property type="match status" value="1"/>
</dbReference>
<dbReference type="InterPro" id="IPR010600">
    <property type="entry name" value="ITI_HC_C"/>
</dbReference>
<dbReference type="InterPro" id="IPR050934">
    <property type="entry name" value="ITIH"/>
</dbReference>
<dbReference type="InterPro" id="IPR013694">
    <property type="entry name" value="VIT"/>
</dbReference>
<dbReference type="InterPro" id="IPR002035">
    <property type="entry name" value="VWF_A"/>
</dbReference>
<dbReference type="InterPro" id="IPR036465">
    <property type="entry name" value="vWFA_dom_sf"/>
</dbReference>
<dbReference type="PANTHER" id="PTHR10338">
    <property type="entry name" value="INTER-ALPHA-TRYPSIN INHIBITOR HEAVY CHAIN FAMILY MEMBER"/>
    <property type="match status" value="1"/>
</dbReference>
<dbReference type="PANTHER" id="PTHR10338:SF119">
    <property type="entry name" value="INTER-ALPHA-TRYPSIN INHIBITOR HEAVY CHAIN H4"/>
    <property type="match status" value="1"/>
</dbReference>
<dbReference type="Pfam" id="PF06668">
    <property type="entry name" value="ITI_HC_C"/>
    <property type="match status" value="1"/>
</dbReference>
<dbReference type="Pfam" id="PF08487">
    <property type="entry name" value="VIT"/>
    <property type="match status" value="1"/>
</dbReference>
<dbReference type="Pfam" id="PF00092">
    <property type="entry name" value="VWA"/>
    <property type="match status" value="1"/>
</dbReference>
<dbReference type="SMART" id="SM00609">
    <property type="entry name" value="VIT"/>
    <property type="match status" value="1"/>
</dbReference>
<dbReference type="SMART" id="SM00327">
    <property type="entry name" value="VWA"/>
    <property type="match status" value="1"/>
</dbReference>
<dbReference type="SUPFAM" id="SSF53300">
    <property type="entry name" value="vWA-like"/>
    <property type="match status" value="1"/>
</dbReference>
<dbReference type="PROSITE" id="PS51468">
    <property type="entry name" value="VIT"/>
    <property type="match status" value="1"/>
</dbReference>
<dbReference type="PROSITE" id="PS50234">
    <property type="entry name" value="VWFA"/>
    <property type="match status" value="1"/>
</dbReference>